<keyword id="KW-0119">Carbohydrate metabolism</keyword>
<keyword id="KW-0963">Cytoplasm</keyword>
<keyword id="KW-0413">Isomerase</keyword>
<keyword id="KW-0460">Magnesium</keyword>
<keyword id="KW-0479">Metal-binding</keyword>
<keyword id="KW-0859">Xylose metabolism</keyword>
<organism>
    <name type="scientific">Caldicellulosiruptor bescii (strain ATCC BAA-1888 / DSM 6725 / KCTC 15123 / Z-1320)</name>
    <name type="common">Anaerocellum thermophilum</name>
    <dbReference type="NCBI Taxonomy" id="521460"/>
    <lineage>
        <taxon>Bacteria</taxon>
        <taxon>Bacillati</taxon>
        <taxon>Bacillota</taxon>
        <taxon>Bacillota incertae sedis</taxon>
        <taxon>Caldicellulosiruptorales</taxon>
        <taxon>Caldicellulosiruptoraceae</taxon>
        <taxon>Caldicellulosiruptor</taxon>
    </lineage>
</organism>
<evidence type="ECO:0000255" key="1">
    <source>
        <dbReference type="HAMAP-Rule" id="MF_00455"/>
    </source>
</evidence>
<proteinExistence type="inferred from homology"/>
<dbReference type="EC" id="5.3.1.5" evidence="1"/>
<dbReference type="EMBL" id="CP001393">
    <property type="protein sequence ID" value="ACM59729.1"/>
    <property type="molecule type" value="Genomic_DNA"/>
</dbReference>
<dbReference type="RefSeq" id="WP_015907182.1">
    <property type="nucleotide sequence ID" value="NC_012034.1"/>
</dbReference>
<dbReference type="SMR" id="B9MPG8"/>
<dbReference type="STRING" id="521460.Athe_0603"/>
<dbReference type="GeneID" id="31771958"/>
<dbReference type="KEGG" id="ate:Athe_0603"/>
<dbReference type="eggNOG" id="COG2115">
    <property type="taxonomic scope" value="Bacteria"/>
</dbReference>
<dbReference type="HOGENOM" id="CLU_037261_1_0_9"/>
<dbReference type="Proteomes" id="UP000007723">
    <property type="component" value="Chromosome"/>
</dbReference>
<dbReference type="GO" id="GO:0005737">
    <property type="term" value="C:cytoplasm"/>
    <property type="evidence" value="ECO:0007669"/>
    <property type="project" value="UniProtKB-SubCell"/>
</dbReference>
<dbReference type="GO" id="GO:0000287">
    <property type="term" value="F:magnesium ion binding"/>
    <property type="evidence" value="ECO:0007669"/>
    <property type="project" value="UniProtKB-UniRule"/>
</dbReference>
<dbReference type="GO" id="GO:0009045">
    <property type="term" value="F:xylose isomerase activity"/>
    <property type="evidence" value="ECO:0007669"/>
    <property type="project" value="UniProtKB-UniRule"/>
</dbReference>
<dbReference type="GO" id="GO:0042732">
    <property type="term" value="P:D-xylose metabolic process"/>
    <property type="evidence" value="ECO:0007669"/>
    <property type="project" value="UniProtKB-UniRule"/>
</dbReference>
<dbReference type="FunFam" id="3.20.20.150:FF:000002">
    <property type="entry name" value="Xylose isomerase"/>
    <property type="match status" value="1"/>
</dbReference>
<dbReference type="Gene3D" id="3.20.20.150">
    <property type="entry name" value="Divalent-metal-dependent TIM barrel enzymes"/>
    <property type="match status" value="1"/>
</dbReference>
<dbReference type="HAMAP" id="MF_00455">
    <property type="entry name" value="Xylose_isom_A"/>
    <property type="match status" value="1"/>
</dbReference>
<dbReference type="InterPro" id="IPR036237">
    <property type="entry name" value="Xyl_isomerase-like_sf"/>
</dbReference>
<dbReference type="InterPro" id="IPR013022">
    <property type="entry name" value="Xyl_isomerase-like_TIM-brl"/>
</dbReference>
<dbReference type="InterPro" id="IPR013452">
    <property type="entry name" value="Xylose_isom_bac"/>
</dbReference>
<dbReference type="InterPro" id="IPR001998">
    <property type="entry name" value="Xylose_isomerase"/>
</dbReference>
<dbReference type="NCBIfam" id="NF003998">
    <property type="entry name" value="PRK05474.1"/>
    <property type="match status" value="1"/>
</dbReference>
<dbReference type="NCBIfam" id="TIGR02630">
    <property type="entry name" value="xylose_isom_A"/>
    <property type="match status" value="1"/>
</dbReference>
<dbReference type="PANTHER" id="PTHR48408">
    <property type="match status" value="1"/>
</dbReference>
<dbReference type="PANTHER" id="PTHR48408:SF1">
    <property type="entry name" value="XYLOSE ISOMERASE"/>
    <property type="match status" value="1"/>
</dbReference>
<dbReference type="Pfam" id="PF01261">
    <property type="entry name" value="AP_endonuc_2"/>
    <property type="match status" value="1"/>
</dbReference>
<dbReference type="PRINTS" id="PR00688">
    <property type="entry name" value="XYLOSISMRASE"/>
</dbReference>
<dbReference type="SUPFAM" id="SSF51658">
    <property type="entry name" value="Xylose isomerase-like"/>
    <property type="match status" value="1"/>
</dbReference>
<dbReference type="PROSITE" id="PS51415">
    <property type="entry name" value="XYLOSE_ISOMERASE"/>
    <property type="match status" value="1"/>
</dbReference>
<reference key="1">
    <citation type="submission" date="2009-01" db="EMBL/GenBank/DDBJ databases">
        <title>Complete sequence of chromosome of Caldicellulosiruptor becscii DSM 6725.</title>
        <authorList>
            <person name="Lucas S."/>
            <person name="Copeland A."/>
            <person name="Lapidus A."/>
            <person name="Glavina del Rio T."/>
            <person name="Tice H."/>
            <person name="Bruce D."/>
            <person name="Goodwin L."/>
            <person name="Pitluck S."/>
            <person name="Sims D."/>
            <person name="Meincke L."/>
            <person name="Brettin T."/>
            <person name="Detter J.C."/>
            <person name="Han C."/>
            <person name="Larimer F."/>
            <person name="Land M."/>
            <person name="Hauser L."/>
            <person name="Kyrpides N."/>
            <person name="Ovchinnikova G."/>
            <person name="Kataeva I."/>
            <person name="Adams M.W.W."/>
        </authorList>
    </citation>
    <scope>NUCLEOTIDE SEQUENCE [LARGE SCALE GENOMIC DNA]</scope>
    <source>
        <strain>ATCC BAA-1888 / DSM 6725 / KCTC 15123 / Z-1320</strain>
    </source>
</reference>
<sequence>MKYFKDIPEVKYEGPQSDNPFAFKYYNPDEIIDGKPLKDHLRFAIAYWHTFCATGSDPFGQPTIVRPWDKFSNRMDNAKARVEAAFEFFELLDVPFFCFHDRDIAPEGENLKESNKNLDEIVSLIKEYLKTSKTKVLWGTANLFSHPRYVHGAATSCNADVFAYAAAQVKKALEVTKELGGENYVFWGGREGYETLLNTDMGLELDNLARFLHMAVEYAKEIGFDGQFLIEPKPKEPTKHQYDFDSAHVYGFLKKYDLDKYFKLNIEVNHATLAGHDFHHELRFARINNMLGSIDANMGDLLLGWDTDQFPTDVRLTTLAMYEVIKAGGFDKGGLNFDAKVRRGSFELEDLVIGHIAGMDAFAKGFKIAYKLVKDGVFDKFIDERYKSYKEGIGAKIVSGEANFKMLEEYALSLDKIENKSGKQELLEMILNKYMFSE</sequence>
<accession>B9MPG8</accession>
<protein>
    <recommendedName>
        <fullName evidence="1">Xylose isomerase</fullName>
        <ecNumber evidence="1">5.3.1.5</ecNumber>
    </recommendedName>
</protein>
<comment type="catalytic activity">
    <reaction evidence="1">
        <text>alpha-D-xylose = alpha-D-xylulofuranose</text>
        <dbReference type="Rhea" id="RHEA:22816"/>
        <dbReference type="ChEBI" id="CHEBI:28518"/>
        <dbReference type="ChEBI" id="CHEBI:188998"/>
        <dbReference type="EC" id="5.3.1.5"/>
    </reaction>
</comment>
<comment type="cofactor">
    <cofactor evidence="1">
        <name>Mg(2+)</name>
        <dbReference type="ChEBI" id="CHEBI:18420"/>
    </cofactor>
    <text evidence="1">Binds 2 magnesium ions per subunit.</text>
</comment>
<comment type="subunit">
    <text evidence="1">Homotetramer.</text>
</comment>
<comment type="subcellular location">
    <subcellularLocation>
        <location evidence="1">Cytoplasm</location>
    </subcellularLocation>
</comment>
<comment type="similarity">
    <text evidence="1">Belongs to the xylose isomerase family.</text>
</comment>
<feature type="chain" id="PRO_1000200276" description="Xylose isomerase">
    <location>
        <begin position="1"/>
        <end position="438"/>
    </location>
</feature>
<feature type="binding site" evidence="1">
    <location>
        <position position="306"/>
    </location>
    <ligand>
        <name>Mg(2+)</name>
        <dbReference type="ChEBI" id="CHEBI:18420"/>
        <label>2</label>
    </ligand>
</feature>
<feature type="binding site" evidence="1">
    <location>
        <position position="308"/>
    </location>
    <ligand>
        <name>Mg(2+)</name>
        <dbReference type="ChEBI" id="CHEBI:18420"/>
        <label>2</label>
    </ligand>
</feature>
<name>XYLA_CALBD</name>
<gene>
    <name evidence="1" type="primary">xylA</name>
    <name type="ordered locus">Athe_0603</name>
</gene>